<reference key="1">
    <citation type="journal article" date="2003" name="Nature">
        <title>Genome divergence in two Prochlorococcus ecotypes reflects oceanic niche differentiation.</title>
        <authorList>
            <person name="Rocap G."/>
            <person name="Larimer F.W."/>
            <person name="Lamerdin J.E."/>
            <person name="Malfatti S."/>
            <person name="Chain P."/>
            <person name="Ahlgren N.A."/>
            <person name="Arellano A."/>
            <person name="Coleman M."/>
            <person name="Hauser L."/>
            <person name="Hess W.R."/>
            <person name="Johnson Z.I."/>
            <person name="Land M.L."/>
            <person name="Lindell D."/>
            <person name="Post A.F."/>
            <person name="Regala W."/>
            <person name="Shah M."/>
            <person name="Shaw S.L."/>
            <person name="Steglich C."/>
            <person name="Sullivan M.B."/>
            <person name="Ting C.S."/>
            <person name="Tolonen A."/>
            <person name="Webb E.A."/>
            <person name="Zinser E.R."/>
            <person name="Chisholm S.W."/>
        </authorList>
    </citation>
    <scope>NUCLEOTIDE SEQUENCE [LARGE SCALE GENOMIC DNA]</scope>
    <source>
        <strain>MIT 9313</strain>
    </source>
</reference>
<name>COAE_PROMM</name>
<proteinExistence type="inferred from homology"/>
<accession>Q7V435</accession>
<comment type="function">
    <text evidence="1">Catalyzes the phosphorylation of the 3'-hydroxyl group of dephosphocoenzyme A to form coenzyme A.</text>
</comment>
<comment type="catalytic activity">
    <reaction evidence="1">
        <text>3'-dephospho-CoA + ATP = ADP + CoA + H(+)</text>
        <dbReference type="Rhea" id="RHEA:18245"/>
        <dbReference type="ChEBI" id="CHEBI:15378"/>
        <dbReference type="ChEBI" id="CHEBI:30616"/>
        <dbReference type="ChEBI" id="CHEBI:57287"/>
        <dbReference type="ChEBI" id="CHEBI:57328"/>
        <dbReference type="ChEBI" id="CHEBI:456216"/>
        <dbReference type="EC" id="2.7.1.24"/>
    </reaction>
</comment>
<comment type="pathway">
    <text evidence="1">Cofactor biosynthesis; coenzyme A biosynthesis; CoA from (R)-pantothenate: step 5/5.</text>
</comment>
<comment type="subcellular location">
    <subcellularLocation>
        <location evidence="1">Cytoplasm</location>
    </subcellularLocation>
</comment>
<comment type="similarity">
    <text evidence="1">Belongs to the CoaE family.</text>
</comment>
<protein>
    <recommendedName>
        <fullName evidence="1">Dephospho-CoA kinase</fullName>
        <ecNumber evidence="1">2.7.1.24</ecNumber>
    </recommendedName>
    <alternativeName>
        <fullName evidence="1">Dephosphocoenzyme A kinase</fullName>
    </alternativeName>
</protein>
<organism>
    <name type="scientific">Prochlorococcus marinus (strain MIT 9313)</name>
    <dbReference type="NCBI Taxonomy" id="74547"/>
    <lineage>
        <taxon>Bacteria</taxon>
        <taxon>Bacillati</taxon>
        <taxon>Cyanobacteriota</taxon>
        <taxon>Cyanophyceae</taxon>
        <taxon>Synechococcales</taxon>
        <taxon>Prochlorococcaceae</taxon>
        <taxon>Prochlorococcus</taxon>
    </lineage>
</organism>
<keyword id="KW-0067">ATP-binding</keyword>
<keyword id="KW-0173">Coenzyme A biosynthesis</keyword>
<keyword id="KW-0963">Cytoplasm</keyword>
<keyword id="KW-0418">Kinase</keyword>
<keyword id="KW-0547">Nucleotide-binding</keyword>
<keyword id="KW-1185">Reference proteome</keyword>
<keyword id="KW-0808">Transferase</keyword>
<evidence type="ECO:0000255" key="1">
    <source>
        <dbReference type="HAMAP-Rule" id="MF_00376"/>
    </source>
</evidence>
<gene>
    <name evidence="1" type="primary">coaE</name>
    <name type="ordered locus">PMT_2136</name>
</gene>
<feature type="chain" id="PRO_0000172978" description="Dephospho-CoA kinase">
    <location>
        <begin position="1"/>
        <end position="204"/>
    </location>
</feature>
<feature type="domain" description="DPCK" evidence="1">
    <location>
        <begin position="12"/>
        <end position="204"/>
    </location>
</feature>
<feature type="binding site" evidence="1">
    <location>
        <begin position="20"/>
        <end position="25"/>
    </location>
    <ligand>
        <name>ATP</name>
        <dbReference type="ChEBI" id="CHEBI:30616"/>
    </ligand>
</feature>
<sequence length="204" mass="22273">MPQARWHGPQRRIGVTGGIASGKSSVGLYLSEQHALPLLDADIYARDALVAGSAATMAVLQRYGNAVAEAGQLNPISIDRIALASIIFSDAQERRWLEQLIHPIVAKRFDVALADLSAEPVVVLMIPLLFEAKLSGLCSDVWLVDCSPAQQCQRLIARDGLTLKQAEQRISTQWPLEQKRPLADLVIDNSGAPRAWRDQISSIC</sequence>
<dbReference type="EC" id="2.7.1.24" evidence="1"/>
<dbReference type="EMBL" id="BX548175">
    <property type="protein sequence ID" value="CAE22310.1"/>
    <property type="molecule type" value="Genomic_DNA"/>
</dbReference>
<dbReference type="SMR" id="Q7V435"/>
<dbReference type="KEGG" id="pmt:PMT_2136"/>
<dbReference type="eggNOG" id="COG0237">
    <property type="taxonomic scope" value="Bacteria"/>
</dbReference>
<dbReference type="HOGENOM" id="CLU_057180_0_0_3"/>
<dbReference type="OrthoDB" id="9812943at2"/>
<dbReference type="UniPathway" id="UPA00241">
    <property type="reaction ID" value="UER00356"/>
</dbReference>
<dbReference type="Proteomes" id="UP000001423">
    <property type="component" value="Chromosome"/>
</dbReference>
<dbReference type="GO" id="GO:0005737">
    <property type="term" value="C:cytoplasm"/>
    <property type="evidence" value="ECO:0007669"/>
    <property type="project" value="UniProtKB-SubCell"/>
</dbReference>
<dbReference type="GO" id="GO:0005524">
    <property type="term" value="F:ATP binding"/>
    <property type="evidence" value="ECO:0007669"/>
    <property type="project" value="UniProtKB-UniRule"/>
</dbReference>
<dbReference type="GO" id="GO:0004140">
    <property type="term" value="F:dephospho-CoA kinase activity"/>
    <property type="evidence" value="ECO:0007669"/>
    <property type="project" value="UniProtKB-UniRule"/>
</dbReference>
<dbReference type="GO" id="GO:0015937">
    <property type="term" value="P:coenzyme A biosynthetic process"/>
    <property type="evidence" value="ECO:0007669"/>
    <property type="project" value="UniProtKB-UniRule"/>
</dbReference>
<dbReference type="CDD" id="cd02022">
    <property type="entry name" value="DPCK"/>
    <property type="match status" value="1"/>
</dbReference>
<dbReference type="Gene3D" id="3.40.50.300">
    <property type="entry name" value="P-loop containing nucleotide triphosphate hydrolases"/>
    <property type="match status" value="1"/>
</dbReference>
<dbReference type="HAMAP" id="MF_00376">
    <property type="entry name" value="Dephospho_CoA_kinase"/>
    <property type="match status" value="1"/>
</dbReference>
<dbReference type="InterPro" id="IPR001977">
    <property type="entry name" value="Depp_CoAkinase"/>
</dbReference>
<dbReference type="InterPro" id="IPR027417">
    <property type="entry name" value="P-loop_NTPase"/>
</dbReference>
<dbReference type="NCBIfam" id="TIGR00152">
    <property type="entry name" value="dephospho-CoA kinase"/>
    <property type="match status" value="1"/>
</dbReference>
<dbReference type="PANTHER" id="PTHR10695:SF46">
    <property type="entry name" value="BIFUNCTIONAL COENZYME A SYNTHASE-RELATED"/>
    <property type="match status" value="1"/>
</dbReference>
<dbReference type="PANTHER" id="PTHR10695">
    <property type="entry name" value="DEPHOSPHO-COA KINASE-RELATED"/>
    <property type="match status" value="1"/>
</dbReference>
<dbReference type="Pfam" id="PF01121">
    <property type="entry name" value="CoaE"/>
    <property type="match status" value="1"/>
</dbReference>
<dbReference type="SUPFAM" id="SSF52540">
    <property type="entry name" value="P-loop containing nucleoside triphosphate hydrolases"/>
    <property type="match status" value="1"/>
</dbReference>
<dbReference type="PROSITE" id="PS51219">
    <property type="entry name" value="DPCK"/>
    <property type="match status" value="1"/>
</dbReference>